<keyword id="KW-0008">Acetylcholine receptor inhibiting toxin</keyword>
<keyword id="KW-0027">Amidation</keyword>
<keyword id="KW-1015">Disulfide bond</keyword>
<keyword id="KW-0872">Ion channel impairing toxin</keyword>
<keyword id="KW-0528">Neurotoxin</keyword>
<keyword id="KW-0629">Postsynaptic neurotoxin</keyword>
<keyword id="KW-0632">Potassium channel impairing toxin</keyword>
<keyword id="KW-0964">Secreted</keyword>
<keyword id="KW-0732">Signal</keyword>
<keyword id="KW-0800">Toxin</keyword>
<keyword id="KW-1220">Voltage-gated potassium channel impairing toxin</keyword>
<sequence>MPSVRSVTCCCLLWMMLSVQLVTPGSPGTAQLSGQRTARSSGSTVCKMMCRLGYGHLYPSCGCRGKRDVVSSSMAV</sequence>
<dbReference type="EMBL" id="DQ447645">
    <property type="protein sequence ID" value="ABE27011.1"/>
    <property type="molecule type" value="mRNA"/>
</dbReference>
<dbReference type="SMR" id="Q0N4U3"/>
<dbReference type="ConoServer" id="1187">
    <property type="toxin name" value="Fe14.2 precursor"/>
</dbReference>
<dbReference type="GO" id="GO:0005576">
    <property type="term" value="C:extracellular region"/>
    <property type="evidence" value="ECO:0007669"/>
    <property type="project" value="UniProtKB-SubCell"/>
</dbReference>
<dbReference type="GO" id="GO:0035792">
    <property type="term" value="C:host cell postsynaptic membrane"/>
    <property type="evidence" value="ECO:0007669"/>
    <property type="project" value="UniProtKB-KW"/>
</dbReference>
<dbReference type="GO" id="GO:0030550">
    <property type="term" value="F:acetylcholine receptor inhibitor activity"/>
    <property type="evidence" value="ECO:0007669"/>
    <property type="project" value="UniProtKB-KW"/>
</dbReference>
<dbReference type="GO" id="GO:0015459">
    <property type="term" value="F:potassium channel regulator activity"/>
    <property type="evidence" value="ECO:0007669"/>
    <property type="project" value="UniProtKB-KW"/>
</dbReference>
<dbReference type="GO" id="GO:0090729">
    <property type="term" value="F:toxin activity"/>
    <property type="evidence" value="ECO:0007669"/>
    <property type="project" value="UniProtKB-KW"/>
</dbReference>
<protein>
    <recommendedName>
        <fullName evidence="4 5">Alpha/kappa-conotoxin-like fe14.2</fullName>
    </recommendedName>
</protein>
<name>CJE2_CONFR</name>
<reference key="1">
    <citation type="journal article" date="2006" name="Biochemistry">
        <title>A novel conotoxin inhibitor of Kv1.6 channel and nAChR subtypes defines a new superfamily of conotoxins.</title>
        <authorList>
            <person name="Imperial J.S."/>
            <person name="Bansal P.S."/>
            <person name="Alewood P.F."/>
            <person name="Daly N.L."/>
            <person name="Craik D.J."/>
            <person name="Sporning A."/>
            <person name="Terlau H."/>
            <person name="Lopez-Vera E."/>
            <person name="Bandyopadhyay P.K."/>
            <person name="Olivera B.M."/>
        </authorList>
    </citation>
    <scope>NUCLEOTIDE SEQUENCE [MRNA]</scope>
    <source>
        <tissue>Venom duct</tissue>
    </source>
</reference>
<accession>Q0N4U3</accession>
<comment type="function">
    <text evidence="2">Highly inhibits both nicotinic acetylcholine receptors (neuronal (alpha-3/beta-4) and muscular (alpha-1/beta-1/epsilon/delta) subtypes) and the voltage-gated potassium channel Kv1.6/KCNA6 subtype.</text>
</comment>
<comment type="subcellular location">
    <subcellularLocation>
        <location evidence="6">Secreted</location>
    </subcellularLocation>
</comment>
<comment type="tissue specificity">
    <text evidence="6">Expressed by the venom duct.</text>
</comment>
<comment type="domain">
    <text evidence="5">The cysteine framework is XIV (C-C-C-C).</text>
</comment>
<comment type="similarity">
    <text evidence="5">Belongs to the conotoxin J superfamily.</text>
</comment>
<proteinExistence type="inferred from homology"/>
<feature type="signal peptide" evidence="3">
    <location>
        <begin position="1"/>
        <end position="24"/>
    </location>
</feature>
<feature type="propeptide" id="PRO_0000260021" evidence="1">
    <location>
        <begin position="25"/>
        <end position="39"/>
    </location>
</feature>
<feature type="peptide" id="PRO_0000260022" description="Alpha/kappa-conotoxin-like fe14.2" evidence="6">
    <location>
        <begin position="40"/>
        <end position="64"/>
    </location>
</feature>
<feature type="propeptide" id="PRO_0000260023" evidence="1">
    <location>
        <begin position="65"/>
        <end position="76"/>
    </location>
</feature>
<feature type="modified residue" description="Arginine amide" evidence="2">
    <location>
        <position position="64"/>
    </location>
</feature>
<feature type="disulfide bond" evidence="2">
    <location>
        <begin position="46"/>
        <end position="61"/>
    </location>
</feature>
<feature type="disulfide bond" evidence="2">
    <location>
        <begin position="50"/>
        <end position="63"/>
    </location>
</feature>
<organism>
    <name type="scientific">Conus ferrugineus</name>
    <name type="common">Cone snail</name>
    <dbReference type="NCBI Taxonomy" id="379542"/>
    <lineage>
        <taxon>Eukaryota</taxon>
        <taxon>Metazoa</taxon>
        <taxon>Spiralia</taxon>
        <taxon>Lophotrochozoa</taxon>
        <taxon>Mollusca</taxon>
        <taxon>Gastropoda</taxon>
        <taxon>Caenogastropoda</taxon>
        <taxon>Neogastropoda</taxon>
        <taxon>Conoidea</taxon>
        <taxon>Conidae</taxon>
        <taxon>Conus</taxon>
        <taxon>Strategoconus</taxon>
    </lineage>
</organism>
<evidence type="ECO:0000250" key="1"/>
<evidence type="ECO:0000250" key="2">
    <source>
        <dbReference type="UniProtKB" id="Q0N4U8"/>
    </source>
</evidence>
<evidence type="ECO:0000255" key="3"/>
<evidence type="ECO:0000303" key="4">
    <source>
    </source>
</evidence>
<evidence type="ECO:0000305" key="5"/>
<evidence type="ECO:0000305" key="6">
    <source>
    </source>
</evidence>